<proteinExistence type="evidence at transcript level"/>
<evidence type="ECO:0000250" key="1"/>
<evidence type="ECO:0000305" key="2"/>
<reference key="1">
    <citation type="journal article" date="1995" name="Biochim. Biophys. Acta">
        <title>Analysis of the primary structure of the chloroplast isozyme of triosephosphate isomerase from rye leaves by protein and cDNA sequencing indicates a eukaryotic origin of its gene.</title>
        <authorList>
            <person name="Schmidt M."/>
            <person name="Svendsen I."/>
            <person name="Feierabend J."/>
        </authorList>
    </citation>
    <scope>NUCLEOTIDE SEQUENCE [MRNA]</scope>
    <source>
        <strain>cv. Halo</strain>
        <tissue>Leaf</tissue>
    </source>
</reference>
<comment type="catalytic activity">
    <reaction>
        <text>D-glyceraldehyde 3-phosphate = dihydroxyacetone phosphate</text>
        <dbReference type="Rhea" id="RHEA:18585"/>
        <dbReference type="ChEBI" id="CHEBI:57642"/>
        <dbReference type="ChEBI" id="CHEBI:59776"/>
        <dbReference type="EC" id="5.3.1.1"/>
    </reaction>
</comment>
<comment type="pathway">
    <text>Carbohydrate biosynthesis; gluconeogenesis.</text>
</comment>
<comment type="pathway">
    <text>Carbohydrate degradation; glycolysis; D-glyceraldehyde 3-phosphate from glycerone phosphate: step 1/1.</text>
</comment>
<comment type="subunit">
    <text evidence="1">Homodimer.</text>
</comment>
<comment type="subcellular location">
    <subcellularLocation>
        <location evidence="2">Cytoplasm</location>
    </subcellularLocation>
</comment>
<comment type="miscellaneous">
    <text>In plants, there are two types of TPIS, cytosolic and plastid.</text>
</comment>
<comment type="similarity">
    <text evidence="2">Belongs to the triosephosphate isomerase family.</text>
</comment>
<name>TPIS_SECCE</name>
<accession>P46226</accession>
<protein>
    <recommendedName>
        <fullName>Triosephosphate isomerase, cytosolic</fullName>
        <shortName>TIM</shortName>
        <shortName>Triose-phosphate isomerase</shortName>
        <ecNumber>5.3.1.1</ecNumber>
    </recommendedName>
</protein>
<sequence>MGRKFFVGGNWKCNGTVSQVETIVNTLNAGQIASPDVVEVVVSPPYVFLPTVKDKLRPEIQVAAQNCWVKKGGAFTGEVSAEMLVNLGIPWVILGHSERRSLLAESSEFVGEKVAYALAQGLKVIACVGETLEQREAGSTMEVVAEQTKAIADKIKDWTNVVVAYEPVWAIGTGKVASPAQAQEVHANLRDWLKTNVSPEVAESTRIIYGGSVTGASCKELAAQPDVDGFLVGGASLKPEFIDIINAATVKSA</sequence>
<keyword id="KW-0963">Cytoplasm</keyword>
<keyword id="KW-0312">Gluconeogenesis</keyword>
<keyword id="KW-0324">Glycolysis</keyword>
<keyword id="KW-0413">Isomerase</keyword>
<dbReference type="EC" id="5.3.1.1"/>
<dbReference type="EMBL" id="Z26875">
    <property type="protein sequence ID" value="CAA81487.1"/>
    <property type="molecule type" value="mRNA"/>
</dbReference>
<dbReference type="PIR" id="S53760">
    <property type="entry name" value="S53760"/>
</dbReference>
<dbReference type="SMR" id="P46226"/>
<dbReference type="EnsemblPlants" id="SECCE3Rv1G0155560.1">
    <property type="protein sequence ID" value="SECCE3Rv1G0155560.1"/>
    <property type="gene ID" value="SECCE3Rv1G0155560"/>
</dbReference>
<dbReference type="Gramene" id="SECCE3Rv1G0155560.1">
    <property type="protein sequence ID" value="SECCE3Rv1G0155560.1"/>
    <property type="gene ID" value="SECCE3Rv1G0155560"/>
</dbReference>
<dbReference type="UniPathway" id="UPA00109">
    <property type="reaction ID" value="UER00189"/>
</dbReference>
<dbReference type="UniPathway" id="UPA00138"/>
<dbReference type="GO" id="GO:0005829">
    <property type="term" value="C:cytosol"/>
    <property type="evidence" value="ECO:0007669"/>
    <property type="project" value="TreeGrafter"/>
</dbReference>
<dbReference type="GO" id="GO:0004807">
    <property type="term" value="F:triose-phosphate isomerase activity"/>
    <property type="evidence" value="ECO:0007669"/>
    <property type="project" value="UniProtKB-EC"/>
</dbReference>
<dbReference type="GO" id="GO:0006094">
    <property type="term" value="P:gluconeogenesis"/>
    <property type="evidence" value="ECO:0007669"/>
    <property type="project" value="UniProtKB-UniPathway"/>
</dbReference>
<dbReference type="GO" id="GO:0046166">
    <property type="term" value="P:glyceraldehyde-3-phosphate biosynthetic process"/>
    <property type="evidence" value="ECO:0007669"/>
    <property type="project" value="TreeGrafter"/>
</dbReference>
<dbReference type="GO" id="GO:0019563">
    <property type="term" value="P:glycerol catabolic process"/>
    <property type="evidence" value="ECO:0007669"/>
    <property type="project" value="TreeGrafter"/>
</dbReference>
<dbReference type="GO" id="GO:0006096">
    <property type="term" value="P:glycolytic process"/>
    <property type="evidence" value="ECO:0007669"/>
    <property type="project" value="UniProtKB-UniPathway"/>
</dbReference>
<dbReference type="CDD" id="cd00311">
    <property type="entry name" value="TIM"/>
    <property type="match status" value="1"/>
</dbReference>
<dbReference type="FunFam" id="3.20.20.70:FF:000025">
    <property type="entry name" value="Triosephosphate isomerase"/>
    <property type="match status" value="1"/>
</dbReference>
<dbReference type="Gene3D" id="3.20.20.70">
    <property type="entry name" value="Aldolase class I"/>
    <property type="match status" value="1"/>
</dbReference>
<dbReference type="HAMAP" id="MF_00147_B">
    <property type="entry name" value="TIM_B"/>
    <property type="match status" value="1"/>
</dbReference>
<dbReference type="InterPro" id="IPR013785">
    <property type="entry name" value="Aldolase_TIM"/>
</dbReference>
<dbReference type="InterPro" id="IPR035990">
    <property type="entry name" value="TIM_sf"/>
</dbReference>
<dbReference type="InterPro" id="IPR022896">
    <property type="entry name" value="TrioseP_Isoase_bac/euk"/>
</dbReference>
<dbReference type="InterPro" id="IPR000652">
    <property type="entry name" value="Triosephosphate_isomerase"/>
</dbReference>
<dbReference type="InterPro" id="IPR020861">
    <property type="entry name" value="Triosephosphate_isomerase_AS"/>
</dbReference>
<dbReference type="NCBIfam" id="TIGR00419">
    <property type="entry name" value="tim"/>
    <property type="match status" value="1"/>
</dbReference>
<dbReference type="PANTHER" id="PTHR21139">
    <property type="entry name" value="TRIOSEPHOSPHATE ISOMERASE"/>
    <property type="match status" value="1"/>
</dbReference>
<dbReference type="PANTHER" id="PTHR21139:SF34">
    <property type="entry name" value="TRIOSEPHOSPHATE ISOMERASE, CYTOSOLIC"/>
    <property type="match status" value="1"/>
</dbReference>
<dbReference type="Pfam" id="PF00121">
    <property type="entry name" value="TIM"/>
    <property type="match status" value="1"/>
</dbReference>
<dbReference type="SUPFAM" id="SSF51351">
    <property type="entry name" value="Triosephosphate isomerase (TIM)"/>
    <property type="match status" value="1"/>
</dbReference>
<dbReference type="PROSITE" id="PS00171">
    <property type="entry name" value="TIM_1"/>
    <property type="match status" value="1"/>
</dbReference>
<dbReference type="PROSITE" id="PS51440">
    <property type="entry name" value="TIM_2"/>
    <property type="match status" value="1"/>
</dbReference>
<organism>
    <name type="scientific">Secale cereale</name>
    <name type="common">Rye</name>
    <dbReference type="NCBI Taxonomy" id="4550"/>
    <lineage>
        <taxon>Eukaryota</taxon>
        <taxon>Viridiplantae</taxon>
        <taxon>Streptophyta</taxon>
        <taxon>Embryophyta</taxon>
        <taxon>Tracheophyta</taxon>
        <taxon>Spermatophyta</taxon>
        <taxon>Magnoliopsida</taxon>
        <taxon>Liliopsida</taxon>
        <taxon>Poales</taxon>
        <taxon>Poaceae</taxon>
        <taxon>BOP clade</taxon>
        <taxon>Pooideae</taxon>
        <taxon>Triticodae</taxon>
        <taxon>Triticeae</taxon>
        <taxon>Hordeinae</taxon>
        <taxon>Secale</taxon>
    </lineage>
</organism>
<feature type="initiator methionine" description="Removed">
    <location>
        <position position="1"/>
    </location>
</feature>
<feature type="chain" id="PRO_0000090154" description="Triosephosphate isomerase, cytosolic">
    <location>
        <begin position="2"/>
        <end position="253"/>
    </location>
</feature>
<feature type="active site" description="Electrophile" evidence="1">
    <location>
        <position position="96"/>
    </location>
</feature>
<feature type="active site" description="Proton acceptor" evidence="1">
    <location>
        <position position="166"/>
    </location>
</feature>
<feature type="binding site" evidence="1">
    <location>
        <position position="10"/>
    </location>
    <ligand>
        <name>substrate</name>
    </ligand>
</feature>
<feature type="binding site" evidence="1">
    <location>
        <position position="12"/>
    </location>
    <ligand>
        <name>substrate</name>
    </ligand>
</feature>